<proteinExistence type="inferred from homology"/>
<protein>
    <recommendedName>
        <fullName evidence="1">Tryptophan synthase beta chain</fullName>
        <ecNumber evidence="1">4.2.1.20</ecNumber>
    </recommendedName>
</protein>
<comment type="function">
    <text evidence="1">The beta subunit is responsible for the synthesis of L-tryptophan from indole and L-serine.</text>
</comment>
<comment type="catalytic activity">
    <reaction evidence="1">
        <text>(1S,2R)-1-C-(indol-3-yl)glycerol 3-phosphate + L-serine = D-glyceraldehyde 3-phosphate + L-tryptophan + H2O</text>
        <dbReference type="Rhea" id="RHEA:10532"/>
        <dbReference type="ChEBI" id="CHEBI:15377"/>
        <dbReference type="ChEBI" id="CHEBI:33384"/>
        <dbReference type="ChEBI" id="CHEBI:57912"/>
        <dbReference type="ChEBI" id="CHEBI:58866"/>
        <dbReference type="ChEBI" id="CHEBI:59776"/>
        <dbReference type="EC" id="4.2.1.20"/>
    </reaction>
</comment>
<comment type="cofactor">
    <cofactor evidence="1">
        <name>pyridoxal 5'-phosphate</name>
        <dbReference type="ChEBI" id="CHEBI:597326"/>
    </cofactor>
</comment>
<comment type="pathway">
    <text evidence="1">Amino-acid biosynthesis; L-tryptophan biosynthesis; L-tryptophan from chorismate: step 5/5.</text>
</comment>
<comment type="subunit">
    <text evidence="1">Tetramer of two alpha and two beta chains.</text>
</comment>
<comment type="similarity">
    <text evidence="1">Belongs to the TrpB family.</text>
</comment>
<organism>
    <name type="scientific">Staphylococcus aureus (strain USA300)</name>
    <dbReference type="NCBI Taxonomy" id="367830"/>
    <lineage>
        <taxon>Bacteria</taxon>
        <taxon>Bacillati</taxon>
        <taxon>Bacillota</taxon>
        <taxon>Bacilli</taxon>
        <taxon>Bacillales</taxon>
        <taxon>Staphylococcaceae</taxon>
        <taxon>Staphylococcus</taxon>
    </lineage>
</organism>
<gene>
    <name evidence="1" type="primary">trpB</name>
    <name type="ordered locus">SAUSA300_1267</name>
</gene>
<reference key="1">
    <citation type="journal article" date="2006" name="Lancet">
        <title>Complete genome sequence of USA300, an epidemic clone of community-acquired meticillin-resistant Staphylococcus aureus.</title>
        <authorList>
            <person name="Diep B.A."/>
            <person name="Gill S.R."/>
            <person name="Chang R.F."/>
            <person name="Phan T.H."/>
            <person name="Chen J.H."/>
            <person name="Davidson M.G."/>
            <person name="Lin F."/>
            <person name="Lin J."/>
            <person name="Carleton H.A."/>
            <person name="Mongodin E.F."/>
            <person name="Sensabaugh G.F."/>
            <person name="Perdreau-Remington F."/>
        </authorList>
    </citation>
    <scope>NUCLEOTIDE SEQUENCE [LARGE SCALE GENOMIC DNA]</scope>
    <source>
        <strain>USA300</strain>
    </source>
</reference>
<name>TRPB_STAA3</name>
<sequence length="404" mass="43965">MNKQIQTEADELGFFGEYGGQYVPETLMPAIIELKKAYKEAKADPEFQRELEYYLSEYVGRATPLTYAASYTESLGGAKIYLKREDLNHTGAHKINNALGQALLAKRMGKKKLVAETGAGQHGVASATVAALFDMELVVFMGSEDIKRQQLNVFRMELLGAKVVAVEDGQGTLSDAVNKALQYWVSHVDDTHYLLGSALGPDPFPTIVRDFQSVIGKEIKSQILKKEGRLPDAIVACIGGGSNAIGTFYPFIKDDVALYGVEAAGQGDDTDKHALAIGKGSPGVLHGTKMYLIQDEDGQVQLAHSISAGLDYPGIGPEHSYYHDIGRVTFENASDTQAMNALINFTKHEGIIPAIESAHALSYVERLAPTMSKEDIIVVTISGRGDKDMETIRQYMVERGLAND</sequence>
<accession>Q2FH64</accession>
<evidence type="ECO:0000255" key="1">
    <source>
        <dbReference type="HAMAP-Rule" id="MF_00133"/>
    </source>
</evidence>
<dbReference type="EC" id="4.2.1.20" evidence="1"/>
<dbReference type="EMBL" id="CP000255">
    <property type="protein sequence ID" value="ABD20758.1"/>
    <property type="molecule type" value="Genomic_DNA"/>
</dbReference>
<dbReference type="RefSeq" id="WP_001041337.1">
    <property type="nucleotide sequence ID" value="NZ_CP027476.1"/>
</dbReference>
<dbReference type="SMR" id="Q2FH64"/>
<dbReference type="KEGG" id="saa:SAUSA300_1267"/>
<dbReference type="HOGENOM" id="CLU_016734_3_1_9"/>
<dbReference type="OMA" id="PLTLCQN"/>
<dbReference type="UniPathway" id="UPA00035">
    <property type="reaction ID" value="UER00044"/>
</dbReference>
<dbReference type="Proteomes" id="UP000001939">
    <property type="component" value="Chromosome"/>
</dbReference>
<dbReference type="GO" id="GO:0005737">
    <property type="term" value="C:cytoplasm"/>
    <property type="evidence" value="ECO:0007669"/>
    <property type="project" value="TreeGrafter"/>
</dbReference>
<dbReference type="GO" id="GO:0004834">
    <property type="term" value="F:tryptophan synthase activity"/>
    <property type="evidence" value="ECO:0007669"/>
    <property type="project" value="UniProtKB-UniRule"/>
</dbReference>
<dbReference type="CDD" id="cd06446">
    <property type="entry name" value="Trp-synth_B"/>
    <property type="match status" value="1"/>
</dbReference>
<dbReference type="FunFam" id="3.40.50.1100:FF:000001">
    <property type="entry name" value="Tryptophan synthase beta chain"/>
    <property type="match status" value="1"/>
</dbReference>
<dbReference type="FunFam" id="3.40.50.1100:FF:000004">
    <property type="entry name" value="Tryptophan synthase beta chain"/>
    <property type="match status" value="1"/>
</dbReference>
<dbReference type="Gene3D" id="3.40.50.1100">
    <property type="match status" value="2"/>
</dbReference>
<dbReference type="HAMAP" id="MF_00133">
    <property type="entry name" value="Trp_synth_beta"/>
    <property type="match status" value="1"/>
</dbReference>
<dbReference type="InterPro" id="IPR006653">
    <property type="entry name" value="Trp_synth_b_CS"/>
</dbReference>
<dbReference type="InterPro" id="IPR006654">
    <property type="entry name" value="Trp_synth_beta"/>
</dbReference>
<dbReference type="InterPro" id="IPR023026">
    <property type="entry name" value="Trp_synth_beta/beta-like"/>
</dbReference>
<dbReference type="InterPro" id="IPR001926">
    <property type="entry name" value="TrpB-like_PALP"/>
</dbReference>
<dbReference type="InterPro" id="IPR036052">
    <property type="entry name" value="TrpB-like_PALP_sf"/>
</dbReference>
<dbReference type="NCBIfam" id="TIGR00263">
    <property type="entry name" value="trpB"/>
    <property type="match status" value="1"/>
</dbReference>
<dbReference type="PANTHER" id="PTHR48077:SF3">
    <property type="entry name" value="TRYPTOPHAN SYNTHASE"/>
    <property type="match status" value="1"/>
</dbReference>
<dbReference type="PANTHER" id="PTHR48077">
    <property type="entry name" value="TRYPTOPHAN SYNTHASE-RELATED"/>
    <property type="match status" value="1"/>
</dbReference>
<dbReference type="Pfam" id="PF00291">
    <property type="entry name" value="PALP"/>
    <property type="match status" value="1"/>
</dbReference>
<dbReference type="PIRSF" id="PIRSF001413">
    <property type="entry name" value="Trp_syn_beta"/>
    <property type="match status" value="1"/>
</dbReference>
<dbReference type="SUPFAM" id="SSF53686">
    <property type="entry name" value="Tryptophan synthase beta subunit-like PLP-dependent enzymes"/>
    <property type="match status" value="1"/>
</dbReference>
<dbReference type="PROSITE" id="PS00168">
    <property type="entry name" value="TRP_SYNTHASE_BETA"/>
    <property type="match status" value="1"/>
</dbReference>
<keyword id="KW-0028">Amino-acid biosynthesis</keyword>
<keyword id="KW-0057">Aromatic amino acid biosynthesis</keyword>
<keyword id="KW-0456">Lyase</keyword>
<keyword id="KW-0663">Pyridoxal phosphate</keyword>
<keyword id="KW-0822">Tryptophan biosynthesis</keyword>
<feature type="chain" id="PRO_1000018405" description="Tryptophan synthase beta chain">
    <location>
        <begin position="1"/>
        <end position="404"/>
    </location>
</feature>
<feature type="modified residue" description="N6-(pyridoxal phosphate)lysine" evidence="1">
    <location>
        <position position="94"/>
    </location>
</feature>